<comment type="function">
    <text evidence="1">Catalyzes oxygen-dependent 5-hydroxyuridine (ho5U) modification at position 34 in tRNAs.</text>
</comment>
<comment type="catalytic activity">
    <reaction evidence="1">
        <text>uridine(34) in tRNA + AH2 + O2 = 5-hydroxyuridine(34) in tRNA + A + H2O</text>
        <dbReference type="Rhea" id="RHEA:64224"/>
        <dbReference type="Rhea" id="RHEA-COMP:11727"/>
        <dbReference type="Rhea" id="RHEA-COMP:13381"/>
        <dbReference type="ChEBI" id="CHEBI:13193"/>
        <dbReference type="ChEBI" id="CHEBI:15377"/>
        <dbReference type="ChEBI" id="CHEBI:15379"/>
        <dbReference type="ChEBI" id="CHEBI:17499"/>
        <dbReference type="ChEBI" id="CHEBI:65315"/>
        <dbReference type="ChEBI" id="CHEBI:136877"/>
    </reaction>
</comment>
<comment type="similarity">
    <text evidence="1">Belongs to the TrhO family.</text>
</comment>
<evidence type="ECO:0000255" key="1">
    <source>
        <dbReference type="HAMAP-Rule" id="MF_00469"/>
    </source>
</evidence>
<name>TRHO_PELUB</name>
<feature type="chain" id="PRO_0000242927" description="tRNA uridine(34) hydroxylase">
    <location>
        <begin position="1"/>
        <end position="301"/>
    </location>
</feature>
<feature type="domain" description="Rhodanese" evidence="1">
    <location>
        <begin position="121"/>
        <end position="212"/>
    </location>
</feature>
<feature type="active site" description="Cysteine persulfide intermediate" evidence="1">
    <location>
        <position position="172"/>
    </location>
</feature>
<keyword id="KW-0560">Oxidoreductase</keyword>
<keyword id="KW-1185">Reference proteome</keyword>
<keyword id="KW-0819">tRNA processing</keyword>
<reference key="1">
    <citation type="journal article" date="2005" name="Science">
        <title>Genome streamlining in a cosmopolitan oceanic bacterium.</title>
        <authorList>
            <person name="Giovannoni S.J."/>
            <person name="Tripp H.J."/>
            <person name="Givan S."/>
            <person name="Podar M."/>
            <person name="Vergin K.L."/>
            <person name="Baptista D."/>
            <person name="Bibbs L."/>
            <person name="Eads J."/>
            <person name="Richardson T.H."/>
            <person name="Noordewier M."/>
            <person name="Rappe M.S."/>
            <person name="Short J.M."/>
            <person name="Carrington J.C."/>
            <person name="Mathur E.J."/>
        </authorList>
    </citation>
    <scope>NUCLEOTIDE SEQUENCE [LARGE SCALE GENOMIC DNA]</scope>
    <source>
        <strain>HTCC1062</strain>
    </source>
</reference>
<sequence length="301" mass="34811">MFDVFGFYKFKKLTSLKKNKILLQDYLIKKNIRGTIIIANEGVNATISGKANDLKSTITKIKKILNFKKFDSENISKSKFQPFHKPKVKIKKEVVPMGLSLSSKNKKNNHIDPKKWNKLINDKDTLVLDSRKPFEYNVGTFKRSVNPDVANFREFPKYLNKLKKTKPIAMFCTGGIRCEKASVFLEKKGFKNVYQLKGGILNYLKNIKKKESLWNGECFVFDNRISVKHGLITGTYSMCSGCRKPVSPKDKKSKKYEEGVSCVNCHDNLTQTQKERFRMRQKQINLAKKTGSKHIFQKEFK</sequence>
<gene>
    <name evidence="1" type="primary">trhO</name>
    <name type="ordered locus">SAR11_1074</name>
</gene>
<proteinExistence type="inferred from homology"/>
<dbReference type="EC" id="1.14.-.-" evidence="1"/>
<dbReference type="EMBL" id="CP000084">
    <property type="protein sequence ID" value="AAZ21878.1"/>
    <property type="molecule type" value="Genomic_DNA"/>
</dbReference>
<dbReference type="RefSeq" id="WP_011282142.1">
    <property type="nucleotide sequence ID" value="NC_007205.1"/>
</dbReference>
<dbReference type="SMR" id="Q4FLR0"/>
<dbReference type="STRING" id="335992.SAR11_1074"/>
<dbReference type="GeneID" id="66295564"/>
<dbReference type="KEGG" id="pub:SAR11_1074"/>
<dbReference type="eggNOG" id="COG1054">
    <property type="taxonomic scope" value="Bacteria"/>
</dbReference>
<dbReference type="HOGENOM" id="CLU_038878_0_0_5"/>
<dbReference type="OrthoDB" id="9778326at2"/>
<dbReference type="Proteomes" id="UP000002528">
    <property type="component" value="Chromosome"/>
</dbReference>
<dbReference type="GO" id="GO:0016705">
    <property type="term" value="F:oxidoreductase activity, acting on paired donors, with incorporation or reduction of molecular oxygen"/>
    <property type="evidence" value="ECO:0007669"/>
    <property type="project" value="UniProtKB-UniRule"/>
</dbReference>
<dbReference type="GO" id="GO:0006400">
    <property type="term" value="P:tRNA modification"/>
    <property type="evidence" value="ECO:0007669"/>
    <property type="project" value="UniProtKB-UniRule"/>
</dbReference>
<dbReference type="CDD" id="cd01518">
    <property type="entry name" value="RHOD_YceA"/>
    <property type="match status" value="1"/>
</dbReference>
<dbReference type="Gene3D" id="3.30.70.100">
    <property type="match status" value="1"/>
</dbReference>
<dbReference type="Gene3D" id="3.40.250.10">
    <property type="entry name" value="Rhodanese-like domain"/>
    <property type="match status" value="1"/>
</dbReference>
<dbReference type="HAMAP" id="MF_00469">
    <property type="entry name" value="TrhO"/>
    <property type="match status" value="1"/>
</dbReference>
<dbReference type="InterPro" id="IPR001763">
    <property type="entry name" value="Rhodanese-like_dom"/>
</dbReference>
<dbReference type="InterPro" id="IPR036873">
    <property type="entry name" value="Rhodanese-like_dom_sf"/>
</dbReference>
<dbReference type="InterPro" id="IPR020936">
    <property type="entry name" value="TrhO"/>
</dbReference>
<dbReference type="InterPro" id="IPR040503">
    <property type="entry name" value="TRHO_N"/>
</dbReference>
<dbReference type="NCBIfam" id="NF001136">
    <property type="entry name" value="PRK00142.1-4"/>
    <property type="match status" value="1"/>
</dbReference>
<dbReference type="PANTHER" id="PTHR43268:SF3">
    <property type="entry name" value="RHODANESE-LIKE DOMAIN-CONTAINING PROTEIN 7-RELATED"/>
    <property type="match status" value="1"/>
</dbReference>
<dbReference type="PANTHER" id="PTHR43268">
    <property type="entry name" value="THIOSULFATE SULFURTRANSFERASE/RHODANESE-LIKE DOMAIN-CONTAINING PROTEIN 2"/>
    <property type="match status" value="1"/>
</dbReference>
<dbReference type="Pfam" id="PF00581">
    <property type="entry name" value="Rhodanese"/>
    <property type="match status" value="1"/>
</dbReference>
<dbReference type="Pfam" id="PF17773">
    <property type="entry name" value="UPF0176_N"/>
    <property type="match status" value="1"/>
</dbReference>
<dbReference type="SMART" id="SM00450">
    <property type="entry name" value="RHOD"/>
    <property type="match status" value="1"/>
</dbReference>
<dbReference type="SUPFAM" id="SSF52821">
    <property type="entry name" value="Rhodanese/Cell cycle control phosphatase"/>
    <property type="match status" value="1"/>
</dbReference>
<dbReference type="PROSITE" id="PS50206">
    <property type="entry name" value="RHODANESE_3"/>
    <property type="match status" value="1"/>
</dbReference>
<organism>
    <name type="scientific">Pelagibacter ubique (strain HTCC1062)</name>
    <dbReference type="NCBI Taxonomy" id="335992"/>
    <lineage>
        <taxon>Bacteria</taxon>
        <taxon>Pseudomonadati</taxon>
        <taxon>Pseudomonadota</taxon>
        <taxon>Alphaproteobacteria</taxon>
        <taxon>Candidatus Pelagibacterales</taxon>
        <taxon>Candidatus Pelagibacteraceae</taxon>
        <taxon>Candidatus Pelagibacter</taxon>
    </lineage>
</organism>
<accession>Q4FLR0</accession>
<protein>
    <recommendedName>
        <fullName evidence="1">tRNA uridine(34) hydroxylase</fullName>
        <ecNumber evidence="1">1.14.-.-</ecNumber>
    </recommendedName>
    <alternativeName>
        <fullName evidence="1">tRNA hydroxylation protein O</fullName>
    </alternativeName>
</protein>